<sequence>MKLCATSSEPARAAWPLSEPALAYFPDARSASDRDLAAGAYSPGVAMEHIPVLLDRCVELLTPALTRRNPDGRGAVLVDATLGAGGHAHRFLSDLPGLHLIGLDRDPQALQIAGERLAPFGDRVSLVRTRYDGIDDALAQTGVAEVSGFLFDLGVSSMQLDRTERGFSYSADAPLDMRMDSDAPLTAADVVNTFAEKDITRILREFGEERFAARIAKHIVRRRPLNTTGELVELLYDAIPAPARRTGGHPAKRTFQALRIAVNSELDSLRAAVPAALAALETGGRIVVMAYQSLEDRIVKTEFAAATASRTPPGLPVELPGHEPEFVALTRGAERATPEEIERNPRSAPVRLRALEKVAGRPTTARRDAR</sequence>
<evidence type="ECO:0000255" key="1">
    <source>
        <dbReference type="HAMAP-Rule" id="MF_01007"/>
    </source>
</evidence>
<evidence type="ECO:0000256" key="2">
    <source>
        <dbReference type="SAM" id="MobiDB-lite"/>
    </source>
</evidence>
<evidence type="ECO:0000305" key="3"/>
<name>RSMH_MYCSK</name>
<comment type="function">
    <text evidence="1">Specifically methylates the N4 position of cytidine in position 1402 (C1402) of 16S rRNA.</text>
</comment>
<comment type="catalytic activity">
    <reaction evidence="1">
        <text>cytidine(1402) in 16S rRNA + S-adenosyl-L-methionine = N(4)-methylcytidine(1402) in 16S rRNA + S-adenosyl-L-homocysteine + H(+)</text>
        <dbReference type="Rhea" id="RHEA:42928"/>
        <dbReference type="Rhea" id="RHEA-COMP:10286"/>
        <dbReference type="Rhea" id="RHEA-COMP:10287"/>
        <dbReference type="ChEBI" id="CHEBI:15378"/>
        <dbReference type="ChEBI" id="CHEBI:57856"/>
        <dbReference type="ChEBI" id="CHEBI:59789"/>
        <dbReference type="ChEBI" id="CHEBI:74506"/>
        <dbReference type="ChEBI" id="CHEBI:82748"/>
        <dbReference type="EC" id="2.1.1.199"/>
    </reaction>
</comment>
<comment type="subcellular location">
    <subcellularLocation>
        <location evidence="1">Cytoplasm</location>
    </subcellularLocation>
</comment>
<comment type="similarity">
    <text evidence="1">Belongs to the methyltransferase superfamily. RsmH family.</text>
</comment>
<comment type="sequence caution" evidence="3">
    <conflict type="erroneous initiation">
        <sequence resource="EMBL-CDS" id="ABL92520"/>
    </conflict>
    <text>Truncated N-terminus.</text>
</comment>
<proteinExistence type="inferred from homology"/>
<keyword id="KW-0963">Cytoplasm</keyword>
<keyword id="KW-0489">Methyltransferase</keyword>
<keyword id="KW-0698">rRNA processing</keyword>
<keyword id="KW-0949">S-adenosyl-L-methionine</keyword>
<keyword id="KW-0808">Transferase</keyword>
<accession>A1UI62</accession>
<reference key="1">
    <citation type="submission" date="2006-12" db="EMBL/GenBank/DDBJ databases">
        <title>Complete sequence of chromosome of Mycobacterium sp. KMS.</title>
        <authorList>
            <consortium name="US DOE Joint Genome Institute"/>
            <person name="Copeland A."/>
            <person name="Lucas S."/>
            <person name="Lapidus A."/>
            <person name="Barry K."/>
            <person name="Detter J.C."/>
            <person name="Glavina del Rio T."/>
            <person name="Hammon N."/>
            <person name="Israni S."/>
            <person name="Dalin E."/>
            <person name="Tice H."/>
            <person name="Pitluck S."/>
            <person name="Kiss H."/>
            <person name="Brettin T."/>
            <person name="Bruce D."/>
            <person name="Han C."/>
            <person name="Tapia R."/>
            <person name="Gilna P."/>
            <person name="Schmutz J."/>
            <person name="Larimer F."/>
            <person name="Land M."/>
            <person name="Hauser L."/>
            <person name="Kyrpides N."/>
            <person name="Mikhailova N."/>
            <person name="Miller C.D."/>
            <person name="Richardson P."/>
        </authorList>
    </citation>
    <scope>NUCLEOTIDE SEQUENCE [LARGE SCALE GENOMIC DNA]</scope>
    <source>
        <strain>KMS</strain>
    </source>
</reference>
<feature type="chain" id="PRO_0000386993" description="Ribosomal RNA small subunit methyltransferase H">
    <location>
        <begin position="1"/>
        <end position="370"/>
    </location>
</feature>
<feature type="region of interest" description="Disordered" evidence="2">
    <location>
        <begin position="332"/>
        <end position="370"/>
    </location>
</feature>
<feature type="compositionally biased region" description="Basic and acidic residues" evidence="2">
    <location>
        <begin position="332"/>
        <end position="345"/>
    </location>
</feature>
<feature type="compositionally biased region" description="Basic and acidic residues" evidence="2">
    <location>
        <begin position="353"/>
        <end position="370"/>
    </location>
</feature>
<feature type="binding site" evidence="1">
    <location>
        <begin position="85"/>
        <end position="87"/>
    </location>
    <ligand>
        <name>S-adenosyl-L-methionine</name>
        <dbReference type="ChEBI" id="CHEBI:59789"/>
    </ligand>
</feature>
<feature type="binding site" evidence="1">
    <location>
        <position position="104"/>
    </location>
    <ligand>
        <name>S-adenosyl-L-methionine</name>
        <dbReference type="ChEBI" id="CHEBI:59789"/>
    </ligand>
</feature>
<feature type="binding site" evidence="1">
    <location>
        <position position="131"/>
    </location>
    <ligand>
        <name>S-adenosyl-L-methionine</name>
        <dbReference type="ChEBI" id="CHEBI:59789"/>
    </ligand>
</feature>
<feature type="binding site" evidence="1">
    <location>
        <position position="152"/>
    </location>
    <ligand>
        <name>S-adenosyl-L-methionine</name>
        <dbReference type="ChEBI" id="CHEBI:59789"/>
    </ligand>
</feature>
<feature type="binding site" evidence="1">
    <location>
        <position position="159"/>
    </location>
    <ligand>
        <name>S-adenosyl-L-methionine</name>
        <dbReference type="ChEBI" id="CHEBI:59789"/>
    </ligand>
</feature>
<protein>
    <recommendedName>
        <fullName evidence="1">Ribosomal RNA small subunit methyltransferase H</fullName>
        <ecNumber evidence="1">2.1.1.199</ecNumber>
    </recommendedName>
    <alternativeName>
        <fullName evidence="1">16S rRNA m(4)C1402 methyltransferase</fullName>
    </alternativeName>
    <alternativeName>
        <fullName evidence="1">rRNA (cytosine-N(4)-)-methyltransferase RsmH</fullName>
    </alternativeName>
</protein>
<gene>
    <name evidence="1" type="primary">rsmH</name>
    <name type="synonym">mraW</name>
    <name type="ordered locus">Mkms_3326</name>
</gene>
<organism>
    <name type="scientific">Mycobacterium sp. (strain KMS)</name>
    <dbReference type="NCBI Taxonomy" id="189918"/>
    <lineage>
        <taxon>Bacteria</taxon>
        <taxon>Bacillati</taxon>
        <taxon>Actinomycetota</taxon>
        <taxon>Actinomycetes</taxon>
        <taxon>Mycobacteriales</taxon>
        <taxon>Mycobacteriaceae</taxon>
        <taxon>Mycobacterium</taxon>
    </lineage>
</organism>
<dbReference type="EC" id="2.1.1.199" evidence="1"/>
<dbReference type="EMBL" id="CP000518">
    <property type="protein sequence ID" value="ABL92520.1"/>
    <property type="status" value="ALT_INIT"/>
    <property type="molecule type" value="Genomic_DNA"/>
</dbReference>
<dbReference type="SMR" id="A1UI62"/>
<dbReference type="STRING" id="189918.Mkms_3326"/>
<dbReference type="KEGG" id="mkm:Mkms_3326"/>
<dbReference type="HOGENOM" id="CLU_038422_0_0_11"/>
<dbReference type="GO" id="GO:0005737">
    <property type="term" value="C:cytoplasm"/>
    <property type="evidence" value="ECO:0007669"/>
    <property type="project" value="UniProtKB-SubCell"/>
</dbReference>
<dbReference type="GO" id="GO:0071424">
    <property type="term" value="F:rRNA (cytosine-N4-)-methyltransferase activity"/>
    <property type="evidence" value="ECO:0007669"/>
    <property type="project" value="UniProtKB-UniRule"/>
</dbReference>
<dbReference type="GO" id="GO:0070475">
    <property type="term" value="P:rRNA base methylation"/>
    <property type="evidence" value="ECO:0007669"/>
    <property type="project" value="UniProtKB-UniRule"/>
</dbReference>
<dbReference type="FunFam" id="1.10.150.170:FF:000001">
    <property type="entry name" value="Ribosomal RNA small subunit methyltransferase H"/>
    <property type="match status" value="1"/>
</dbReference>
<dbReference type="Gene3D" id="1.10.150.170">
    <property type="entry name" value="Putative methyltransferase TM0872, insert domain"/>
    <property type="match status" value="1"/>
</dbReference>
<dbReference type="Gene3D" id="3.40.50.150">
    <property type="entry name" value="Vaccinia Virus protein VP39"/>
    <property type="match status" value="1"/>
</dbReference>
<dbReference type="HAMAP" id="MF_01007">
    <property type="entry name" value="16SrRNA_methyltr_H"/>
    <property type="match status" value="1"/>
</dbReference>
<dbReference type="InterPro" id="IPR002903">
    <property type="entry name" value="RsmH"/>
</dbReference>
<dbReference type="InterPro" id="IPR023397">
    <property type="entry name" value="SAM-dep_MeTrfase_MraW_recog"/>
</dbReference>
<dbReference type="InterPro" id="IPR029063">
    <property type="entry name" value="SAM-dependent_MTases_sf"/>
</dbReference>
<dbReference type="NCBIfam" id="TIGR00006">
    <property type="entry name" value="16S rRNA (cytosine(1402)-N(4))-methyltransferase RsmH"/>
    <property type="match status" value="1"/>
</dbReference>
<dbReference type="PANTHER" id="PTHR11265:SF0">
    <property type="entry name" value="12S RRNA N4-METHYLCYTIDINE METHYLTRANSFERASE"/>
    <property type="match status" value="1"/>
</dbReference>
<dbReference type="PANTHER" id="PTHR11265">
    <property type="entry name" value="S-ADENOSYL-METHYLTRANSFERASE MRAW"/>
    <property type="match status" value="1"/>
</dbReference>
<dbReference type="Pfam" id="PF01795">
    <property type="entry name" value="Methyltransf_5"/>
    <property type="match status" value="1"/>
</dbReference>
<dbReference type="PIRSF" id="PIRSF004486">
    <property type="entry name" value="MraW"/>
    <property type="match status" value="1"/>
</dbReference>
<dbReference type="SUPFAM" id="SSF81799">
    <property type="entry name" value="Putative methyltransferase TM0872, insert domain"/>
    <property type="match status" value="1"/>
</dbReference>
<dbReference type="SUPFAM" id="SSF53335">
    <property type="entry name" value="S-adenosyl-L-methionine-dependent methyltransferases"/>
    <property type="match status" value="1"/>
</dbReference>